<comment type="function">
    <text evidence="1">Site-specific tyrosine recombinase, which acts by catalyzing the cutting and rejoining of the recombining DNA molecules. The XerC-XerD complex is essential to convert dimers of the bacterial chromosome into monomers to permit their segregation at cell division. It also contributes to the segregational stability of plasmids.</text>
</comment>
<comment type="subunit">
    <text evidence="1">Forms a cyclic heterotetrameric complex composed of two molecules of XerC and two molecules of XerD.</text>
</comment>
<comment type="subcellular location">
    <subcellularLocation>
        <location evidence="1">Cytoplasm</location>
    </subcellularLocation>
</comment>
<comment type="similarity">
    <text evidence="1">Belongs to the 'phage' integrase family. XerD subfamily.</text>
</comment>
<keyword id="KW-0131">Cell cycle</keyword>
<keyword id="KW-0132">Cell division</keyword>
<keyword id="KW-0159">Chromosome partition</keyword>
<keyword id="KW-0963">Cytoplasm</keyword>
<keyword id="KW-0229">DNA integration</keyword>
<keyword id="KW-0233">DNA recombination</keyword>
<keyword id="KW-0238">DNA-binding</keyword>
<keyword id="KW-1185">Reference proteome</keyword>
<evidence type="ECO:0000255" key="1">
    <source>
        <dbReference type="HAMAP-Rule" id="MF_01807"/>
    </source>
</evidence>
<evidence type="ECO:0000255" key="2">
    <source>
        <dbReference type="PROSITE-ProRule" id="PRU01246"/>
    </source>
</evidence>
<evidence type="ECO:0000255" key="3">
    <source>
        <dbReference type="PROSITE-ProRule" id="PRU01248"/>
    </source>
</evidence>
<feature type="chain" id="PRO_0000095402" description="Tyrosine recombinase XerD">
    <location>
        <begin position="1"/>
        <end position="297"/>
    </location>
</feature>
<feature type="domain" description="Core-binding (CB)" evidence="3">
    <location>
        <begin position="1"/>
        <end position="87"/>
    </location>
</feature>
<feature type="domain" description="Tyr recombinase" evidence="2">
    <location>
        <begin position="108"/>
        <end position="291"/>
    </location>
</feature>
<feature type="active site" evidence="1">
    <location>
        <position position="147"/>
    </location>
</feature>
<feature type="active site" evidence="1">
    <location>
        <position position="171"/>
    </location>
</feature>
<feature type="active site" evidence="1">
    <location>
        <position position="243"/>
    </location>
</feature>
<feature type="active site" evidence="1">
    <location>
        <position position="246"/>
    </location>
</feature>
<feature type="active site" evidence="1">
    <location>
        <position position="269"/>
    </location>
</feature>
<feature type="active site" description="O-(3'-phospho-DNA)-tyrosine intermediate" evidence="1">
    <location>
        <position position="278"/>
    </location>
</feature>
<gene>
    <name evidence="1" type="primary">xerD</name>
    <name type="ordered locus">OB1847</name>
</gene>
<proteinExistence type="inferred from homology"/>
<dbReference type="EMBL" id="BA000028">
    <property type="protein sequence ID" value="BAC13803.1"/>
    <property type="molecule type" value="Genomic_DNA"/>
</dbReference>
<dbReference type="RefSeq" id="WP_011066243.1">
    <property type="nucleotide sequence ID" value="NC_004193.1"/>
</dbReference>
<dbReference type="SMR" id="Q7ZAM3"/>
<dbReference type="STRING" id="221109.gene:10734087"/>
<dbReference type="KEGG" id="oih:OB1847"/>
<dbReference type="eggNOG" id="COG4974">
    <property type="taxonomic scope" value="Bacteria"/>
</dbReference>
<dbReference type="HOGENOM" id="CLU_027562_9_6_9"/>
<dbReference type="OrthoDB" id="9801717at2"/>
<dbReference type="PhylomeDB" id="Q7ZAM3"/>
<dbReference type="Proteomes" id="UP000000822">
    <property type="component" value="Chromosome"/>
</dbReference>
<dbReference type="GO" id="GO:0005737">
    <property type="term" value="C:cytoplasm"/>
    <property type="evidence" value="ECO:0007669"/>
    <property type="project" value="UniProtKB-SubCell"/>
</dbReference>
<dbReference type="GO" id="GO:0003677">
    <property type="term" value="F:DNA binding"/>
    <property type="evidence" value="ECO:0007669"/>
    <property type="project" value="UniProtKB-KW"/>
</dbReference>
<dbReference type="GO" id="GO:0009037">
    <property type="term" value="F:tyrosine-based site-specific recombinase activity"/>
    <property type="evidence" value="ECO:0007669"/>
    <property type="project" value="UniProtKB-UniRule"/>
</dbReference>
<dbReference type="GO" id="GO:0051301">
    <property type="term" value="P:cell division"/>
    <property type="evidence" value="ECO:0007669"/>
    <property type="project" value="UniProtKB-KW"/>
</dbReference>
<dbReference type="GO" id="GO:0007059">
    <property type="term" value="P:chromosome segregation"/>
    <property type="evidence" value="ECO:0007669"/>
    <property type="project" value="UniProtKB-UniRule"/>
</dbReference>
<dbReference type="GO" id="GO:0006313">
    <property type="term" value="P:DNA transposition"/>
    <property type="evidence" value="ECO:0007669"/>
    <property type="project" value="UniProtKB-UniRule"/>
</dbReference>
<dbReference type="CDD" id="cd00798">
    <property type="entry name" value="INT_XerDC_C"/>
    <property type="match status" value="1"/>
</dbReference>
<dbReference type="Gene3D" id="1.10.150.130">
    <property type="match status" value="1"/>
</dbReference>
<dbReference type="Gene3D" id="1.10.443.10">
    <property type="entry name" value="Intergrase catalytic core"/>
    <property type="match status" value="1"/>
</dbReference>
<dbReference type="HAMAP" id="MF_01808">
    <property type="entry name" value="Recomb_XerC_XerD"/>
    <property type="match status" value="1"/>
</dbReference>
<dbReference type="HAMAP" id="MF_01807">
    <property type="entry name" value="Recomb_XerD"/>
    <property type="match status" value="1"/>
</dbReference>
<dbReference type="InterPro" id="IPR044068">
    <property type="entry name" value="CB"/>
</dbReference>
<dbReference type="InterPro" id="IPR011010">
    <property type="entry name" value="DNA_brk_join_enz"/>
</dbReference>
<dbReference type="InterPro" id="IPR013762">
    <property type="entry name" value="Integrase-like_cat_sf"/>
</dbReference>
<dbReference type="InterPro" id="IPR002104">
    <property type="entry name" value="Integrase_catalytic"/>
</dbReference>
<dbReference type="InterPro" id="IPR010998">
    <property type="entry name" value="Integrase_recombinase_N"/>
</dbReference>
<dbReference type="InterPro" id="IPR004107">
    <property type="entry name" value="Integrase_SAM-like_N"/>
</dbReference>
<dbReference type="InterPro" id="IPR011931">
    <property type="entry name" value="Recomb_XerC"/>
</dbReference>
<dbReference type="InterPro" id="IPR011932">
    <property type="entry name" value="Recomb_XerD"/>
</dbReference>
<dbReference type="InterPro" id="IPR023009">
    <property type="entry name" value="Tyrosine_recombinase_XerC/XerD"/>
</dbReference>
<dbReference type="InterPro" id="IPR050090">
    <property type="entry name" value="Tyrosine_recombinase_XerCD"/>
</dbReference>
<dbReference type="NCBIfam" id="NF001399">
    <property type="entry name" value="PRK00283.1"/>
    <property type="match status" value="1"/>
</dbReference>
<dbReference type="NCBIfam" id="NF040815">
    <property type="entry name" value="recomb_XerA_Arch"/>
    <property type="match status" value="1"/>
</dbReference>
<dbReference type="NCBIfam" id="TIGR02224">
    <property type="entry name" value="recomb_XerC"/>
    <property type="match status" value="1"/>
</dbReference>
<dbReference type="NCBIfam" id="TIGR02225">
    <property type="entry name" value="recomb_XerD"/>
    <property type="match status" value="1"/>
</dbReference>
<dbReference type="PANTHER" id="PTHR30349">
    <property type="entry name" value="PHAGE INTEGRASE-RELATED"/>
    <property type="match status" value="1"/>
</dbReference>
<dbReference type="PANTHER" id="PTHR30349:SF81">
    <property type="entry name" value="TYROSINE RECOMBINASE XERC"/>
    <property type="match status" value="1"/>
</dbReference>
<dbReference type="Pfam" id="PF02899">
    <property type="entry name" value="Phage_int_SAM_1"/>
    <property type="match status" value="1"/>
</dbReference>
<dbReference type="Pfam" id="PF00589">
    <property type="entry name" value="Phage_integrase"/>
    <property type="match status" value="1"/>
</dbReference>
<dbReference type="SUPFAM" id="SSF56349">
    <property type="entry name" value="DNA breaking-rejoining enzymes"/>
    <property type="match status" value="1"/>
</dbReference>
<dbReference type="PROSITE" id="PS51900">
    <property type="entry name" value="CB"/>
    <property type="match status" value="1"/>
</dbReference>
<dbReference type="PROSITE" id="PS51898">
    <property type="entry name" value="TYR_RECOMBINASE"/>
    <property type="match status" value="1"/>
</dbReference>
<accession>Q7ZAM3</accession>
<protein>
    <recommendedName>
        <fullName evidence="1">Tyrosine recombinase XerD</fullName>
    </recommendedName>
</protein>
<sequence length="297" mass="34470">MLEYAIEDFFHFLRIERGLSDNTLSSYKRDLTNYLQYMKDHDKTATWDKISRTDIMGFLYMLKDQGKSTATISRHISSIRSFHQFLIREQITSNDPSLHIETPKKDRKLPDILSQDEVDRLLEIKMNTKLSVRNKAMLELLYATGLRVSELISLNVSDLHLMMGFVQCFGKGSKERIVPLGDTAKHYLEKYISEARDSLIKKNNREDALFVNQHGRRLTRQGFWKILKGLTLEAGILKTITPHTLRHSFATHLLENGADLRLVQEMLGHADISTTQVYTHVTKARLKDMYQSYHPRA</sequence>
<name>XERD_OCEIH</name>
<reference key="1">
    <citation type="journal article" date="2002" name="Nucleic Acids Res.">
        <title>Genome sequence of Oceanobacillus iheyensis isolated from the Iheya Ridge and its unexpected adaptive capabilities to extreme environments.</title>
        <authorList>
            <person name="Takami H."/>
            <person name="Takaki Y."/>
            <person name="Uchiyama I."/>
        </authorList>
    </citation>
    <scope>NUCLEOTIDE SEQUENCE [LARGE SCALE GENOMIC DNA]</scope>
    <source>
        <strain>DSM 14371 / CIP 107618 / JCM 11309 / KCTC 3954 / HTE831</strain>
    </source>
</reference>
<organism>
    <name type="scientific">Oceanobacillus iheyensis (strain DSM 14371 / CIP 107618 / JCM 11309 / KCTC 3954 / HTE831)</name>
    <dbReference type="NCBI Taxonomy" id="221109"/>
    <lineage>
        <taxon>Bacteria</taxon>
        <taxon>Bacillati</taxon>
        <taxon>Bacillota</taxon>
        <taxon>Bacilli</taxon>
        <taxon>Bacillales</taxon>
        <taxon>Bacillaceae</taxon>
        <taxon>Oceanobacillus</taxon>
    </lineage>
</organism>